<gene>
    <name evidence="7" type="primary">lys4</name>
    <name type="ORF">SPBC1105.02c</name>
</gene>
<name>HOSM_SCHPO</name>
<proteinExistence type="evidence at protein level"/>
<accession>Q9Y823</accession>
<reference key="1">
    <citation type="journal article" date="2002" name="Nature">
        <title>The genome sequence of Schizosaccharomyces pombe.</title>
        <authorList>
            <person name="Wood V."/>
            <person name="Gwilliam R."/>
            <person name="Rajandream M.A."/>
            <person name="Lyne M.H."/>
            <person name="Lyne R."/>
            <person name="Stewart A."/>
            <person name="Sgouros J.G."/>
            <person name="Peat N."/>
            <person name="Hayles J."/>
            <person name="Baker S.G."/>
            <person name="Basham D."/>
            <person name="Bowman S."/>
            <person name="Brooks K."/>
            <person name="Brown D."/>
            <person name="Brown S."/>
            <person name="Chillingworth T."/>
            <person name="Churcher C.M."/>
            <person name="Collins M."/>
            <person name="Connor R."/>
            <person name="Cronin A."/>
            <person name="Davis P."/>
            <person name="Feltwell T."/>
            <person name="Fraser A."/>
            <person name="Gentles S."/>
            <person name="Goble A."/>
            <person name="Hamlin N."/>
            <person name="Harris D.E."/>
            <person name="Hidalgo J."/>
            <person name="Hodgson G."/>
            <person name="Holroyd S."/>
            <person name="Hornsby T."/>
            <person name="Howarth S."/>
            <person name="Huckle E.J."/>
            <person name="Hunt S."/>
            <person name="Jagels K."/>
            <person name="James K.D."/>
            <person name="Jones L."/>
            <person name="Jones M."/>
            <person name="Leather S."/>
            <person name="McDonald S."/>
            <person name="McLean J."/>
            <person name="Mooney P."/>
            <person name="Moule S."/>
            <person name="Mungall K.L."/>
            <person name="Murphy L.D."/>
            <person name="Niblett D."/>
            <person name="Odell C."/>
            <person name="Oliver K."/>
            <person name="O'Neil S."/>
            <person name="Pearson D."/>
            <person name="Quail M.A."/>
            <person name="Rabbinowitsch E."/>
            <person name="Rutherford K.M."/>
            <person name="Rutter S."/>
            <person name="Saunders D."/>
            <person name="Seeger K."/>
            <person name="Sharp S."/>
            <person name="Skelton J."/>
            <person name="Simmonds M.N."/>
            <person name="Squares R."/>
            <person name="Squares S."/>
            <person name="Stevens K."/>
            <person name="Taylor K."/>
            <person name="Taylor R.G."/>
            <person name="Tivey A."/>
            <person name="Walsh S.V."/>
            <person name="Warren T."/>
            <person name="Whitehead S."/>
            <person name="Woodward J.R."/>
            <person name="Volckaert G."/>
            <person name="Aert R."/>
            <person name="Robben J."/>
            <person name="Grymonprez B."/>
            <person name="Weltjens I."/>
            <person name="Vanstreels E."/>
            <person name="Rieger M."/>
            <person name="Schaefer M."/>
            <person name="Mueller-Auer S."/>
            <person name="Gabel C."/>
            <person name="Fuchs M."/>
            <person name="Duesterhoeft A."/>
            <person name="Fritzc C."/>
            <person name="Holzer E."/>
            <person name="Moestl D."/>
            <person name="Hilbert H."/>
            <person name="Borzym K."/>
            <person name="Langer I."/>
            <person name="Beck A."/>
            <person name="Lehrach H."/>
            <person name="Reinhardt R."/>
            <person name="Pohl T.M."/>
            <person name="Eger P."/>
            <person name="Zimmermann W."/>
            <person name="Wedler H."/>
            <person name="Wambutt R."/>
            <person name="Purnelle B."/>
            <person name="Goffeau A."/>
            <person name="Cadieu E."/>
            <person name="Dreano S."/>
            <person name="Gloux S."/>
            <person name="Lelaure V."/>
            <person name="Mottier S."/>
            <person name="Galibert F."/>
            <person name="Aves S.J."/>
            <person name="Xiang Z."/>
            <person name="Hunt C."/>
            <person name="Moore K."/>
            <person name="Hurst S.M."/>
            <person name="Lucas M."/>
            <person name="Rochet M."/>
            <person name="Gaillardin C."/>
            <person name="Tallada V.A."/>
            <person name="Garzon A."/>
            <person name="Thode G."/>
            <person name="Daga R.R."/>
            <person name="Cruzado L."/>
            <person name="Jimenez J."/>
            <person name="Sanchez M."/>
            <person name="del Rey F."/>
            <person name="Benito J."/>
            <person name="Dominguez A."/>
            <person name="Revuelta J.L."/>
            <person name="Moreno S."/>
            <person name="Armstrong J."/>
            <person name="Forsburg S.L."/>
            <person name="Cerutti L."/>
            <person name="Lowe T."/>
            <person name="McCombie W.R."/>
            <person name="Paulsen I."/>
            <person name="Potashkin J."/>
            <person name="Shpakovski G.V."/>
            <person name="Ussery D."/>
            <person name="Barrell B.G."/>
            <person name="Nurse P."/>
        </authorList>
    </citation>
    <scope>NUCLEOTIDE SEQUENCE [LARGE SCALE GENOMIC DNA]</scope>
    <source>
        <strain>972 / ATCC 24843</strain>
    </source>
</reference>
<reference evidence="9 10 11" key="2">
    <citation type="journal article" date="2009" name="J. Biol. Chem.">
        <title>Crystal structure and functional analysis of homocitrate synthase, an essential enzyme in lysine biosynthesis.</title>
        <authorList>
            <person name="Bulfer S.L."/>
            <person name="Scott E.M."/>
            <person name="Couture J.F."/>
            <person name="Pillus L."/>
            <person name="Trievel R.C."/>
        </authorList>
    </citation>
    <scope>X-RAY CRYSTALLOGRAPHY (2.24 ANGSTROMS) IN COMPLEX WITH 2-OXOGLUTARATE AND ZN(2+)</scope>
    <scope>FUNCTION</scope>
    <scope>CATALYTIC ACTIVITY</scope>
    <scope>BIOPHYSICOCHEMICAL PROPERTIES</scope>
    <scope>MUTAGENESIS OF ARG-43; GLN-47; GLU-74; HIS-103; ARG-163; SER-165; GLU-167; THR-197 AND TYR-332</scope>
</reference>
<reference evidence="12" key="3">
    <citation type="journal article" date="2010" name="J. Biol. Chem.">
        <title>Structural basis for L-lysine feedback inhibition of homocitrate synthase.</title>
        <authorList>
            <person name="Bulfer S.L."/>
            <person name="Scott E.M."/>
            <person name="Pillus L."/>
            <person name="Trievel R.C."/>
        </authorList>
    </citation>
    <scope>X-RAY CRYSTALLOGRAPHY (2.38 ANGSTROMS) IN COMPLEX WITH L-LYSINE AND ZN(2+)</scope>
    <scope>FUNCTION</scope>
    <scope>CATALYTIC ACTIVITY</scope>
    <scope>BIOPHYSICOCHEMICAL PROPERTIES</scope>
    <scope>ACTIVITY REGULATION</scope>
    <scope>MUTAGENESIS OF ASP-123; GLU-222; ARG-288 AND GLN-364</scope>
</reference>
<organism>
    <name type="scientific">Schizosaccharomyces pombe (strain 972 / ATCC 24843)</name>
    <name type="common">Fission yeast</name>
    <dbReference type="NCBI Taxonomy" id="284812"/>
    <lineage>
        <taxon>Eukaryota</taxon>
        <taxon>Fungi</taxon>
        <taxon>Dikarya</taxon>
        <taxon>Ascomycota</taxon>
        <taxon>Taphrinomycotina</taxon>
        <taxon>Schizosaccharomycetes</taxon>
        <taxon>Schizosaccharomycetales</taxon>
        <taxon>Schizosaccharomycetaceae</taxon>
        <taxon>Schizosaccharomyces</taxon>
    </lineage>
</organism>
<protein>
    <recommendedName>
        <fullName evidence="7">Homocitrate synthase, mitochondrial</fullName>
        <shortName evidence="7">HCS</shortName>
        <ecNumber evidence="5 6">2.3.3.14</ecNumber>
    </recommendedName>
</protein>
<evidence type="ECO:0000250" key="1">
    <source>
        <dbReference type="UniProtKB" id="O87198"/>
    </source>
</evidence>
<evidence type="ECO:0000255" key="2"/>
<evidence type="ECO:0000255" key="3">
    <source>
        <dbReference type="PROSITE-ProRule" id="PRU01151"/>
    </source>
</evidence>
<evidence type="ECO:0000256" key="4">
    <source>
        <dbReference type="SAM" id="MobiDB-lite"/>
    </source>
</evidence>
<evidence type="ECO:0000269" key="5">
    <source>
    </source>
</evidence>
<evidence type="ECO:0000269" key="6">
    <source>
    </source>
</evidence>
<evidence type="ECO:0000303" key="7">
    <source>
    </source>
</evidence>
<evidence type="ECO:0000305" key="8"/>
<evidence type="ECO:0007744" key="9">
    <source>
        <dbReference type="PDB" id="3IVS"/>
    </source>
</evidence>
<evidence type="ECO:0007744" key="10">
    <source>
        <dbReference type="PDB" id="3IVT"/>
    </source>
</evidence>
<evidence type="ECO:0007744" key="11">
    <source>
        <dbReference type="PDB" id="3IVU"/>
    </source>
</evidence>
<evidence type="ECO:0007744" key="12">
    <source>
        <dbReference type="PDB" id="3MI3"/>
    </source>
</evidence>
<evidence type="ECO:0007829" key="13">
    <source>
        <dbReference type="PDB" id="3IVS"/>
    </source>
</evidence>
<evidence type="ECO:0007829" key="14">
    <source>
        <dbReference type="PDB" id="3IVT"/>
    </source>
</evidence>
<feature type="transit peptide" description="Mitochondrion" evidence="2">
    <location>
        <begin position="1"/>
        <end status="unknown"/>
    </location>
</feature>
<feature type="chain" id="PRO_0000001049" description="Homocitrate synthase, mitochondrial">
    <location>
        <begin status="unknown"/>
        <end position="418"/>
    </location>
</feature>
<feature type="domain" description="Pyruvate carboxyltransferase" evidence="3">
    <location>
        <begin position="35"/>
        <end position="288"/>
    </location>
</feature>
<feature type="region of interest" description="Disordered" evidence="4">
    <location>
        <begin position="1"/>
        <end position="25"/>
    </location>
</feature>
<feature type="compositionally biased region" description="Polar residues" evidence="4">
    <location>
        <begin position="1"/>
        <end position="10"/>
    </location>
</feature>
<feature type="compositionally biased region" description="Low complexity" evidence="4">
    <location>
        <begin position="14"/>
        <end position="25"/>
    </location>
</feature>
<feature type="active site" description="Proton acceptor" evidence="1">
    <location>
        <position position="321"/>
    </location>
</feature>
<feature type="binding site" evidence="5 10 11">
    <location>
        <position position="43"/>
    </location>
    <ligand>
        <name>2-oxoglutarate</name>
        <dbReference type="ChEBI" id="CHEBI:16810"/>
    </ligand>
</feature>
<feature type="binding site" evidence="5 10 11">
    <location>
        <position position="44"/>
    </location>
    <ligand>
        <name>2-oxoglutarate</name>
        <dbReference type="ChEBI" id="CHEBI:16810"/>
    </ligand>
</feature>
<feature type="binding site" evidence="6 12">
    <location>
        <position position="44"/>
    </location>
    <ligand>
        <name>L-lysine</name>
        <dbReference type="ChEBI" id="CHEBI:32551"/>
        <note>inhibitor</note>
    </ligand>
</feature>
<feature type="binding site" evidence="5 10 12">
    <location>
        <position position="44"/>
    </location>
    <ligand>
        <name>Zn(2+)</name>
        <dbReference type="ChEBI" id="CHEBI:29105"/>
    </ligand>
</feature>
<feature type="binding site" evidence="5 10 11">
    <location>
        <position position="103"/>
    </location>
    <ligand>
        <name>2-oxoglutarate</name>
        <dbReference type="ChEBI" id="CHEBI:16810"/>
    </ligand>
</feature>
<feature type="binding site" evidence="6 12">
    <location>
        <position position="123"/>
    </location>
    <ligand>
        <name>L-lysine</name>
        <dbReference type="ChEBI" id="CHEBI:32551"/>
        <note>inhibitor</note>
    </ligand>
</feature>
<feature type="binding site" evidence="5 10 11">
    <location>
        <position position="163"/>
    </location>
    <ligand>
        <name>2-oxoglutarate</name>
        <dbReference type="ChEBI" id="CHEBI:16810"/>
    </ligand>
</feature>
<feature type="binding site" evidence="5 10">
    <location>
        <position position="165"/>
    </location>
    <ligand>
        <name>2-oxoglutarate</name>
        <dbReference type="ChEBI" id="CHEBI:16810"/>
    </ligand>
</feature>
<feature type="binding site" evidence="5 10 11">
    <location>
        <position position="197"/>
    </location>
    <ligand>
        <name>2-oxoglutarate</name>
        <dbReference type="ChEBI" id="CHEBI:16810"/>
    </ligand>
</feature>
<feature type="binding site" evidence="6 12">
    <location>
        <position position="197"/>
    </location>
    <ligand>
        <name>L-lysine</name>
        <dbReference type="ChEBI" id="CHEBI:32551"/>
        <note>inhibitor</note>
    </ligand>
</feature>
<feature type="binding site" evidence="5 10 11">
    <location>
        <position position="224"/>
    </location>
    <ligand>
        <name>2-oxoglutarate</name>
        <dbReference type="ChEBI" id="CHEBI:16810"/>
    </ligand>
</feature>
<feature type="binding site" evidence="5 10 12">
    <location>
        <position position="224"/>
    </location>
    <ligand>
        <name>Zn(2+)</name>
        <dbReference type="ChEBI" id="CHEBI:29105"/>
    </ligand>
</feature>
<feature type="binding site" evidence="5 10 11">
    <location>
        <position position="226"/>
    </location>
    <ligand>
        <name>2-oxoglutarate</name>
        <dbReference type="ChEBI" id="CHEBI:16810"/>
    </ligand>
</feature>
<feature type="binding site" evidence="5 10 12">
    <location>
        <position position="226"/>
    </location>
    <ligand>
        <name>Zn(2+)</name>
        <dbReference type="ChEBI" id="CHEBI:29105"/>
    </ligand>
</feature>
<feature type="mutagenesis site" description="Abolishes the catalytic activity." evidence="5">
    <original>R</original>
    <variation>A</variation>
    <variation>K</variation>
    <variation>Q</variation>
    <location>
        <position position="43"/>
    </location>
</feature>
<feature type="mutagenesis site" description="Abolishes the catalytic activity." evidence="5">
    <original>Q</original>
    <variation>A</variation>
    <location>
        <position position="47"/>
    </location>
</feature>
<feature type="mutagenesis site" description="Abolishes the catalytic activity." evidence="5">
    <original>E</original>
    <variation>A</variation>
    <location>
        <position position="74"/>
    </location>
</feature>
<feature type="mutagenesis site" description="Results in a moderate decrease in the turnover number and a slight increase in the Km value for each substrate." evidence="5">
    <original>E</original>
    <variation>Q</variation>
    <location>
        <position position="74"/>
    </location>
</feature>
<feature type="mutagenesis site" description="Substantially impairs catalytic efficiency." evidence="5">
    <original>H</original>
    <variation>A</variation>
    <location>
        <position position="103"/>
    </location>
</feature>
<feature type="mutagenesis site" description="Does not affect the catalytic activity but impairs L-lysine inhibition." evidence="6">
    <original>D</original>
    <variation>N</variation>
    <location>
        <position position="123"/>
    </location>
</feature>
<feature type="mutagenesis site" description="Abolishes the catalytic activity." evidence="6">
    <original>R</original>
    <variation>A</variation>
    <variation>Q</variation>
    <location>
        <position position="163"/>
    </location>
</feature>
<feature type="mutagenesis site" description="Severely diminishes affinity for 2-oxoglutarate and substantially impairs catalytic efficiency." evidence="5">
    <original>R</original>
    <variation>K</variation>
    <location>
        <position position="163"/>
    </location>
</feature>
<feature type="mutagenesis site" description="Results in a moderate decrease in catalytic efficiency." evidence="5">
    <original>S</original>
    <variation>A</variation>
    <location>
        <position position="165"/>
    </location>
</feature>
<feature type="mutagenesis site" description="Abolishes the catalytic activity." evidence="5">
    <original>E</original>
    <variation>A</variation>
    <variation>Q</variation>
    <location>
        <position position="167"/>
    </location>
</feature>
<feature type="mutagenesis site" description="Exhibits a 25-fold decrease in catalytic efficiency." evidence="5">
    <original>T</original>
    <variation>A</variation>
    <location>
        <position position="197"/>
    </location>
</feature>
<feature type="mutagenesis site" description="Results in a modest decrease in catalytic efficiency." evidence="5">
    <original>T</original>
    <variation>S</variation>
    <location>
        <position position="197"/>
    </location>
</feature>
<feature type="mutagenesis site" description="Abolishes the catalytic activity." evidence="5">
    <original>T</original>
    <variation>V</variation>
    <location>
        <position position="197"/>
    </location>
</feature>
<feature type="mutagenesis site" description="Does not affect the catalytic activity but impairs L-lysine inhibition." evidence="6">
    <original>E</original>
    <variation>Q</variation>
    <location>
        <position position="222"/>
    </location>
</feature>
<feature type="mutagenesis site" description="Does not affect the catalytic activity but impairs L-lysine inhibition." evidence="6">
    <original>R</original>
    <variation>K</variation>
    <location>
        <position position="288"/>
    </location>
</feature>
<feature type="mutagenesis site" description="Abolishes the catalytic activity." evidence="5">
    <original>Y</original>
    <variation>A</variation>
    <location>
        <position position="332"/>
    </location>
</feature>
<feature type="mutagenesis site" description="Results in a decrease in catalytic efficiency." evidence="5">
    <original>Y</original>
    <variation>F</variation>
    <location>
        <position position="332"/>
    </location>
</feature>
<feature type="mutagenesis site" description="Does not affect the catalytic activity but impairs L-lysine inhibition." evidence="6">
    <original>Q</original>
    <variation>R</variation>
    <location>
        <position position="364"/>
    </location>
</feature>
<feature type="strand" evidence="14">
    <location>
        <begin position="8"/>
        <end position="10"/>
    </location>
</feature>
<feature type="helix" evidence="13">
    <location>
        <begin position="25"/>
        <end position="29"/>
    </location>
</feature>
<feature type="strand" evidence="13">
    <location>
        <begin position="36"/>
        <end position="39"/>
    </location>
</feature>
<feature type="turn" evidence="13">
    <location>
        <begin position="41"/>
        <end position="43"/>
    </location>
</feature>
<feature type="helix" evidence="13">
    <location>
        <begin position="44"/>
        <end position="47"/>
    </location>
</feature>
<feature type="helix" evidence="13">
    <location>
        <begin position="55"/>
        <end position="68"/>
    </location>
</feature>
<feature type="strand" evidence="13">
    <location>
        <begin position="71"/>
        <end position="75"/>
    </location>
</feature>
<feature type="helix" evidence="13">
    <location>
        <begin position="82"/>
        <end position="92"/>
    </location>
</feature>
<feature type="strand" evidence="13">
    <location>
        <begin position="97"/>
        <end position="106"/>
    </location>
</feature>
<feature type="helix" evidence="13">
    <location>
        <begin position="108"/>
        <end position="116"/>
    </location>
</feature>
<feature type="strand" evidence="13">
    <location>
        <begin position="120"/>
        <end position="127"/>
    </location>
</feature>
<feature type="strand" evidence="14">
    <location>
        <begin position="130"/>
        <end position="136"/>
    </location>
</feature>
<feature type="helix" evidence="13">
    <location>
        <begin position="143"/>
        <end position="156"/>
    </location>
</feature>
<feature type="turn" evidence="13">
    <location>
        <begin position="157"/>
        <end position="159"/>
    </location>
</feature>
<feature type="strand" evidence="13">
    <location>
        <begin position="161"/>
        <end position="168"/>
    </location>
</feature>
<feature type="helix" evidence="13">
    <location>
        <begin position="169"/>
        <end position="171"/>
    </location>
</feature>
<feature type="helix" evidence="13">
    <location>
        <begin position="174"/>
        <end position="187"/>
    </location>
</feature>
<feature type="strand" evidence="13">
    <location>
        <begin position="190"/>
        <end position="196"/>
    </location>
</feature>
<feature type="helix" evidence="13">
    <location>
        <begin position="203"/>
        <end position="216"/>
    </location>
</feature>
<feature type="strand" evidence="13">
    <location>
        <begin position="218"/>
        <end position="226"/>
    </location>
</feature>
<feature type="helix" evidence="13">
    <location>
        <begin position="232"/>
        <end position="241"/>
    </location>
</feature>
<feature type="strand" evidence="13">
    <location>
        <begin position="246"/>
        <end position="250"/>
    </location>
</feature>
<feature type="helix" evidence="13">
    <location>
        <begin position="251"/>
        <end position="253"/>
    </location>
</feature>
<feature type="helix" evidence="13">
    <location>
        <begin position="263"/>
        <end position="273"/>
    </location>
</feature>
<feature type="helix" evidence="13">
    <location>
        <begin position="275"/>
        <end position="281"/>
    </location>
</feature>
<feature type="helix" evidence="13">
    <location>
        <begin position="284"/>
        <end position="286"/>
    </location>
</feature>
<feature type="helix" evidence="13">
    <location>
        <begin position="287"/>
        <end position="297"/>
    </location>
</feature>
<feature type="turn" evidence="13">
    <location>
        <begin position="307"/>
        <end position="309"/>
    </location>
</feature>
<feature type="turn" evidence="13">
    <location>
        <begin position="311"/>
        <end position="314"/>
    </location>
</feature>
<feature type="strand" evidence="13">
    <location>
        <begin position="315"/>
        <end position="317"/>
    </location>
</feature>
<feature type="helix" evidence="13">
    <location>
        <begin position="320"/>
        <end position="324"/>
    </location>
</feature>
<feature type="strand" evidence="13">
    <location>
        <begin position="325"/>
        <end position="327"/>
    </location>
</feature>
<feature type="helix" evidence="13">
    <location>
        <begin position="329"/>
        <end position="331"/>
    </location>
</feature>
<feature type="helix" evidence="13">
    <location>
        <begin position="337"/>
        <end position="340"/>
    </location>
</feature>
<feature type="strand" evidence="13">
    <location>
        <begin position="346"/>
        <end position="350"/>
    </location>
</feature>
<feature type="helix" evidence="13">
    <location>
        <begin position="355"/>
        <end position="364"/>
    </location>
</feature>
<feature type="turn" evidence="13">
    <location>
        <begin position="374"/>
        <end position="376"/>
    </location>
</feature>
<feature type="turn" evidence="13">
    <location>
        <begin position="379"/>
        <end position="383"/>
    </location>
</feature>
<feature type="helix" evidence="13">
    <location>
        <begin position="394"/>
        <end position="399"/>
    </location>
</feature>
<sequence length="418" mass="46293">MSVSEANGTETIKPPMNGNPYGPNPSDFLSRVNNFSIIESTLREGEQFANAFFDTEKKIQIAKALDNFGVDYIELTSPVASEQSRQDCEAICKLGLKCKILTHIRCHMDDARVAVETGVDGVDVVIGTSQYLRKYSHGKDMTYIIDSATEVINFVKSKGIEVRFSSEDSFRSDLVDLLSLYKAVDKIGVNRVGIADTVGCATPRQVYDLIRTLRGVVSCDIECHFHNDTGMAIANAYCALEAGATHIDTSILGIGERNGITPLGALLARMYVTDREYITHKYKLNQLRELENLVADAVEVQIPFNNYITGMCAFTHKAGIHAKAILANPSTYEILKPEDFGMSRYVHVGSRLTGWNAIKSRAEQLNLHLTDAQAKELTVRIKKLADVRTLAMDDVDRVLREYHADLSDADRITKEASA</sequence>
<comment type="function">
    <text evidence="5 6">Catalyzes the aldol-type condensation of 2-oxoglutarate with acetyl-CoA to yield homocitrate, the first step of the alpha-aminoadipate (AAA) lysine biosynthesis pathway.</text>
</comment>
<comment type="catalytic activity">
    <reaction evidence="5 6">
        <text>acetyl-CoA + 2-oxoglutarate + H2O = (2R)-homocitrate + CoA + H(+)</text>
        <dbReference type="Rhea" id="RHEA:12929"/>
        <dbReference type="ChEBI" id="CHEBI:15377"/>
        <dbReference type="ChEBI" id="CHEBI:15378"/>
        <dbReference type="ChEBI" id="CHEBI:16810"/>
        <dbReference type="ChEBI" id="CHEBI:57287"/>
        <dbReference type="ChEBI" id="CHEBI:57288"/>
        <dbReference type="ChEBI" id="CHEBI:58884"/>
        <dbReference type="EC" id="2.3.3.14"/>
    </reaction>
    <physiologicalReaction direction="left-to-right" evidence="5 6">
        <dbReference type="Rhea" id="RHEA:12930"/>
    </physiologicalReaction>
</comment>
<comment type="cofactor">
    <cofactor evidence="1">
        <name>Mg(2+)</name>
        <dbReference type="ChEBI" id="CHEBI:18420"/>
    </cofactor>
    <cofactor evidence="1">
        <name>Mn(2+)</name>
        <dbReference type="ChEBI" id="CHEBI:29035"/>
    </cofactor>
    <cofactor evidence="5 6">
        <name>Zn(2+)</name>
        <dbReference type="ChEBI" id="CHEBI:29105"/>
    </cofactor>
    <cofactor evidence="5">
        <name>Co(2+)</name>
        <dbReference type="ChEBI" id="CHEBI:48828"/>
    </cofactor>
</comment>
<comment type="activity regulation">
    <text evidence="6">The activity is controled by feedback inhibition by L-lysine, the final product of the pathway that acts as a competitive inhibitor of 2-oxoglutarate.</text>
</comment>
<comment type="biophysicochemical properties">
    <kinetics>
        <KM evidence="5 6">10.7 uM for acetyl-CoA</KM>
        <KM evidence="5 6">0.159 mM for 2-oxoglutarate</KM>
    </kinetics>
</comment>
<comment type="pathway">
    <text evidence="5 6">Amino-acid biosynthesis; L-lysine biosynthesis via AAA pathway; L-alpha-aminoadipate from 2-oxoglutarate: step 1/5.</text>
</comment>
<comment type="subcellular location">
    <subcellularLocation>
        <location evidence="8">Mitochondrion</location>
    </subcellularLocation>
</comment>
<comment type="similarity">
    <text evidence="8">Belongs to the alpha-IPM synthase/homocitrate synthase family. Homocitrate synthase LYS20/LYS21 subfamily.</text>
</comment>
<dbReference type="EC" id="2.3.3.14" evidence="5 6"/>
<dbReference type="EMBL" id="CU329671">
    <property type="protein sequence ID" value="CAB50965.1"/>
    <property type="molecule type" value="Genomic_DNA"/>
</dbReference>
<dbReference type="PIR" id="T39279">
    <property type="entry name" value="T39279"/>
</dbReference>
<dbReference type="RefSeq" id="NP_596458.1">
    <property type="nucleotide sequence ID" value="NM_001022377.2"/>
</dbReference>
<dbReference type="PDB" id="3IVS">
    <property type="method" value="X-ray"/>
    <property type="resolution" value="2.24 A"/>
    <property type="chains" value="A/B=1-418"/>
</dbReference>
<dbReference type="PDB" id="3IVT">
    <property type="method" value="X-ray"/>
    <property type="resolution" value="2.67 A"/>
    <property type="chains" value="A/B=1-418"/>
</dbReference>
<dbReference type="PDB" id="3IVU">
    <property type="method" value="X-ray"/>
    <property type="resolution" value="2.72 A"/>
    <property type="chains" value="A/B=1-418"/>
</dbReference>
<dbReference type="PDB" id="3MI3">
    <property type="method" value="X-ray"/>
    <property type="resolution" value="2.38 A"/>
    <property type="chains" value="A/B=1-418"/>
</dbReference>
<dbReference type="PDBsum" id="3IVS"/>
<dbReference type="PDBsum" id="3IVT"/>
<dbReference type="PDBsum" id="3IVU"/>
<dbReference type="PDBsum" id="3MI3"/>
<dbReference type="SMR" id="Q9Y823"/>
<dbReference type="BioGRID" id="276365">
    <property type="interactions" value="52"/>
</dbReference>
<dbReference type="FunCoup" id="Q9Y823">
    <property type="interactions" value="342"/>
</dbReference>
<dbReference type="STRING" id="284812.Q9Y823"/>
<dbReference type="iPTMnet" id="Q9Y823"/>
<dbReference type="PaxDb" id="4896-SPBC1105.02c.1"/>
<dbReference type="EnsemblFungi" id="SPBC1105.02c.1">
    <property type="protein sequence ID" value="SPBC1105.02c.1:pep"/>
    <property type="gene ID" value="SPBC1105.02c"/>
</dbReference>
<dbReference type="GeneID" id="2539815"/>
<dbReference type="KEGG" id="spo:2539815"/>
<dbReference type="PomBase" id="SPBC1105.02c">
    <property type="gene designation" value="lys4"/>
</dbReference>
<dbReference type="VEuPathDB" id="FungiDB:SPBC1105.02c"/>
<dbReference type="eggNOG" id="KOG2367">
    <property type="taxonomic scope" value="Eukaryota"/>
</dbReference>
<dbReference type="HOGENOM" id="CLU_022158_2_2_1"/>
<dbReference type="InParanoid" id="Q9Y823"/>
<dbReference type="OMA" id="NTMRMLV"/>
<dbReference type="PhylomeDB" id="Q9Y823"/>
<dbReference type="BRENDA" id="2.3.3.14">
    <property type="organism ID" value="5613"/>
</dbReference>
<dbReference type="UniPathway" id="UPA00033">
    <property type="reaction ID" value="UER00028"/>
</dbReference>
<dbReference type="EvolutionaryTrace" id="Q9Y823"/>
<dbReference type="PRO" id="PR:Q9Y823"/>
<dbReference type="Proteomes" id="UP000002485">
    <property type="component" value="Chromosome II"/>
</dbReference>
<dbReference type="GO" id="GO:0005829">
    <property type="term" value="C:cytosol"/>
    <property type="evidence" value="ECO:0007005"/>
    <property type="project" value="PomBase"/>
</dbReference>
<dbReference type="GO" id="GO:0005759">
    <property type="term" value="C:mitochondrial matrix"/>
    <property type="evidence" value="ECO:0000305"/>
    <property type="project" value="PomBase"/>
</dbReference>
<dbReference type="GO" id="GO:0005634">
    <property type="term" value="C:nucleus"/>
    <property type="evidence" value="ECO:0000266"/>
    <property type="project" value="PomBase"/>
</dbReference>
<dbReference type="GO" id="GO:0004410">
    <property type="term" value="F:homocitrate synthase activity"/>
    <property type="evidence" value="ECO:0000314"/>
    <property type="project" value="PomBase"/>
</dbReference>
<dbReference type="GO" id="GO:0046872">
    <property type="term" value="F:metal ion binding"/>
    <property type="evidence" value="ECO:0007669"/>
    <property type="project" value="UniProtKB-KW"/>
</dbReference>
<dbReference type="GO" id="GO:0009085">
    <property type="term" value="P:lysine biosynthetic process"/>
    <property type="evidence" value="ECO:0000314"/>
    <property type="project" value="PomBase"/>
</dbReference>
<dbReference type="GO" id="GO:0019878">
    <property type="term" value="P:lysine biosynthetic process via aminoadipic acid"/>
    <property type="evidence" value="ECO:0000315"/>
    <property type="project" value="PomBase"/>
</dbReference>
<dbReference type="CDD" id="cd07948">
    <property type="entry name" value="DRE_TIM_HCS"/>
    <property type="match status" value="1"/>
</dbReference>
<dbReference type="DisProt" id="DP02786"/>
<dbReference type="FunFam" id="1.10.238.260:FF:000002">
    <property type="entry name" value="Homocitrate synthase, mitochondrial"/>
    <property type="match status" value="1"/>
</dbReference>
<dbReference type="FunFam" id="3.20.20.70:FF:000032">
    <property type="entry name" value="Homocitrate synthase, mitochondrial"/>
    <property type="match status" value="1"/>
</dbReference>
<dbReference type="Gene3D" id="1.10.238.260">
    <property type="match status" value="1"/>
</dbReference>
<dbReference type="Gene3D" id="3.20.20.70">
    <property type="entry name" value="Aldolase class I"/>
    <property type="match status" value="1"/>
</dbReference>
<dbReference type="HAMAP" id="MF_02222">
    <property type="entry name" value="Homocitr_synth_fung_arch"/>
    <property type="match status" value="1"/>
</dbReference>
<dbReference type="InterPro" id="IPR050073">
    <property type="entry name" value="2-IPM_HCS-like"/>
</dbReference>
<dbReference type="InterPro" id="IPR002034">
    <property type="entry name" value="AIPM/Hcit_synth_CS"/>
</dbReference>
<dbReference type="InterPro" id="IPR013785">
    <property type="entry name" value="Aldolase_TIM"/>
</dbReference>
<dbReference type="InterPro" id="IPR048253">
    <property type="entry name" value="DRE_TIM_HCS_fun_bact"/>
</dbReference>
<dbReference type="InterPro" id="IPR011872">
    <property type="entry name" value="Homocitrate_synth"/>
</dbReference>
<dbReference type="InterPro" id="IPR054691">
    <property type="entry name" value="LeuA/HCS_post-cat"/>
</dbReference>
<dbReference type="InterPro" id="IPR000891">
    <property type="entry name" value="PYR_CT"/>
</dbReference>
<dbReference type="NCBIfam" id="TIGR02146">
    <property type="entry name" value="LysS_fung_arch"/>
    <property type="match status" value="1"/>
</dbReference>
<dbReference type="PANTHER" id="PTHR10277:SF48">
    <property type="entry name" value="HOMOCITRATE SYNTHASE, CYTOSOLIC ISOZYME-RELATED"/>
    <property type="match status" value="1"/>
</dbReference>
<dbReference type="PANTHER" id="PTHR10277">
    <property type="entry name" value="HOMOCITRATE SYNTHASE-RELATED"/>
    <property type="match status" value="1"/>
</dbReference>
<dbReference type="Pfam" id="PF22617">
    <property type="entry name" value="HCS_D2"/>
    <property type="match status" value="1"/>
</dbReference>
<dbReference type="Pfam" id="PF00682">
    <property type="entry name" value="HMGL-like"/>
    <property type="match status" value="1"/>
</dbReference>
<dbReference type="SUPFAM" id="SSF51569">
    <property type="entry name" value="Aldolase"/>
    <property type="match status" value="1"/>
</dbReference>
<dbReference type="PROSITE" id="PS00815">
    <property type="entry name" value="AIPM_HOMOCIT_SYNTH_1"/>
    <property type="match status" value="1"/>
</dbReference>
<dbReference type="PROSITE" id="PS00816">
    <property type="entry name" value="AIPM_HOMOCIT_SYNTH_2"/>
    <property type="match status" value="1"/>
</dbReference>
<dbReference type="PROSITE" id="PS50991">
    <property type="entry name" value="PYR_CT"/>
    <property type="match status" value="1"/>
</dbReference>
<keyword id="KW-0002">3D-structure</keyword>
<keyword id="KW-0028">Amino-acid biosynthesis</keyword>
<keyword id="KW-0457">Lysine biosynthesis</keyword>
<keyword id="KW-0460">Magnesium</keyword>
<keyword id="KW-0464">Manganese</keyword>
<keyword id="KW-0479">Metal-binding</keyword>
<keyword id="KW-0496">Mitochondrion</keyword>
<keyword id="KW-1185">Reference proteome</keyword>
<keyword id="KW-0808">Transferase</keyword>
<keyword id="KW-0809">Transit peptide</keyword>